<accession>A8G739</accession>
<protein>
    <recommendedName>
        <fullName evidence="1">DNA-directed RNA polymerase subunit alpha</fullName>
        <shortName evidence="1">RNAP subunit alpha</shortName>
        <ecNumber evidence="1">2.7.7.6</ecNumber>
    </recommendedName>
    <alternativeName>
        <fullName evidence="1">RNA polymerase subunit alpha</fullName>
    </alternativeName>
    <alternativeName>
        <fullName evidence="1">Transcriptase subunit alpha</fullName>
    </alternativeName>
</protein>
<sequence length="312" mass="34096">MLQYQIDRIDHQIADDRSQTGTFLIGPLERGQATTLGNSLRRVLMGGLEGSAVTAVRIAGINHEYATIPGVREDVLDILLNCKQLSINSSSPDLEIGRLVASGPMDVKANDIQFSSQVEIVDGEKPIATIQEGHNLELEIHVERGVGYRPVDRKSEETTAIDLLQIDAVFMPVKRVNFTIDETAVAEGGTGRERLKMEVVTDGSTSPDDAIAEAANQLIELFQPLATVTMVEEIPEEPEPSPEAQIPLEELNLSVRAYNCLKRAQVNSVSDLMGFSYEDLLEIKNFGSKSADEVIDALERIGISIPQSRTSV</sequence>
<proteinExistence type="inferred from homology"/>
<feature type="chain" id="PRO_0000323645" description="DNA-directed RNA polymerase subunit alpha">
    <location>
        <begin position="1"/>
        <end position="312"/>
    </location>
</feature>
<feature type="region of interest" description="Alpha N-terminal domain (alpha-NTD)" evidence="1">
    <location>
        <begin position="1"/>
        <end position="229"/>
    </location>
</feature>
<feature type="region of interest" description="Alpha C-terminal domain (alpha-CTD)" evidence="1">
    <location>
        <begin position="241"/>
        <end position="312"/>
    </location>
</feature>
<organism>
    <name type="scientific">Prochlorococcus marinus (strain MIT 9215)</name>
    <dbReference type="NCBI Taxonomy" id="93060"/>
    <lineage>
        <taxon>Bacteria</taxon>
        <taxon>Bacillati</taxon>
        <taxon>Cyanobacteriota</taxon>
        <taxon>Cyanophyceae</taxon>
        <taxon>Synechococcales</taxon>
        <taxon>Prochlorococcaceae</taxon>
        <taxon>Prochlorococcus</taxon>
    </lineage>
</organism>
<comment type="function">
    <text evidence="1">DNA-dependent RNA polymerase catalyzes the transcription of DNA into RNA using the four ribonucleoside triphosphates as substrates.</text>
</comment>
<comment type="catalytic activity">
    <reaction evidence="1">
        <text>RNA(n) + a ribonucleoside 5'-triphosphate = RNA(n+1) + diphosphate</text>
        <dbReference type="Rhea" id="RHEA:21248"/>
        <dbReference type="Rhea" id="RHEA-COMP:14527"/>
        <dbReference type="Rhea" id="RHEA-COMP:17342"/>
        <dbReference type="ChEBI" id="CHEBI:33019"/>
        <dbReference type="ChEBI" id="CHEBI:61557"/>
        <dbReference type="ChEBI" id="CHEBI:140395"/>
        <dbReference type="EC" id="2.7.7.6"/>
    </reaction>
</comment>
<comment type="subunit">
    <text evidence="1">In cyanobacteria the RNAP catalytic core is composed of 2 alpha, 1 beta, 1 beta', 1 gamma and 1 omega subunit. When a sigma factor is associated with the core the holoenzyme is formed, which can initiate transcription.</text>
</comment>
<comment type="domain">
    <text evidence="1">The N-terminal domain is essential for RNAP assembly and basal transcription, whereas the C-terminal domain is involved in interaction with transcriptional regulators and with upstream promoter elements.</text>
</comment>
<comment type="similarity">
    <text evidence="1">Belongs to the RNA polymerase alpha chain family.</text>
</comment>
<keyword id="KW-0240">DNA-directed RNA polymerase</keyword>
<keyword id="KW-0548">Nucleotidyltransferase</keyword>
<keyword id="KW-0804">Transcription</keyword>
<keyword id="KW-0808">Transferase</keyword>
<name>RPOA_PROM2</name>
<reference key="1">
    <citation type="journal article" date="2007" name="PLoS Genet.">
        <title>Patterns and implications of gene gain and loss in the evolution of Prochlorococcus.</title>
        <authorList>
            <person name="Kettler G.C."/>
            <person name="Martiny A.C."/>
            <person name="Huang K."/>
            <person name="Zucker J."/>
            <person name="Coleman M.L."/>
            <person name="Rodrigue S."/>
            <person name="Chen F."/>
            <person name="Lapidus A."/>
            <person name="Ferriera S."/>
            <person name="Johnson J."/>
            <person name="Steglich C."/>
            <person name="Church G.M."/>
            <person name="Richardson P."/>
            <person name="Chisholm S.W."/>
        </authorList>
    </citation>
    <scope>NUCLEOTIDE SEQUENCE [LARGE SCALE GENOMIC DNA]</scope>
    <source>
        <strain>MIT 9215</strain>
    </source>
</reference>
<dbReference type="EC" id="2.7.7.6" evidence="1"/>
<dbReference type="EMBL" id="CP000825">
    <property type="protein sequence ID" value="ABV51420.1"/>
    <property type="molecule type" value="Genomic_DNA"/>
</dbReference>
<dbReference type="RefSeq" id="WP_012008433.1">
    <property type="nucleotide sequence ID" value="NC_009840.1"/>
</dbReference>
<dbReference type="SMR" id="A8G739"/>
<dbReference type="STRING" id="93060.P9215_18071"/>
<dbReference type="KEGG" id="pmh:P9215_18071"/>
<dbReference type="eggNOG" id="COG0202">
    <property type="taxonomic scope" value="Bacteria"/>
</dbReference>
<dbReference type="HOGENOM" id="CLU_053084_0_1_3"/>
<dbReference type="OrthoDB" id="9805706at2"/>
<dbReference type="Proteomes" id="UP000002014">
    <property type="component" value="Chromosome"/>
</dbReference>
<dbReference type="GO" id="GO:0005737">
    <property type="term" value="C:cytoplasm"/>
    <property type="evidence" value="ECO:0007669"/>
    <property type="project" value="UniProtKB-ARBA"/>
</dbReference>
<dbReference type="GO" id="GO:0000428">
    <property type="term" value="C:DNA-directed RNA polymerase complex"/>
    <property type="evidence" value="ECO:0007669"/>
    <property type="project" value="UniProtKB-KW"/>
</dbReference>
<dbReference type="GO" id="GO:0003677">
    <property type="term" value="F:DNA binding"/>
    <property type="evidence" value="ECO:0007669"/>
    <property type="project" value="UniProtKB-UniRule"/>
</dbReference>
<dbReference type="GO" id="GO:0003899">
    <property type="term" value="F:DNA-directed RNA polymerase activity"/>
    <property type="evidence" value="ECO:0007669"/>
    <property type="project" value="UniProtKB-UniRule"/>
</dbReference>
<dbReference type="GO" id="GO:0046983">
    <property type="term" value="F:protein dimerization activity"/>
    <property type="evidence" value="ECO:0007669"/>
    <property type="project" value="InterPro"/>
</dbReference>
<dbReference type="GO" id="GO:0006351">
    <property type="term" value="P:DNA-templated transcription"/>
    <property type="evidence" value="ECO:0007669"/>
    <property type="project" value="UniProtKB-UniRule"/>
</dbReference>
<dbReference type="CDD" id="cd06928">
    <property type="entry name" value="RNAP_alpha_NTD"/>
    <property type="match status" value="1"/>
</dbReference>
<dbReference type="FunFam" id="2.170.120.12:FF:000001">
    <property type="entry name" value="DNA-directed RNA polymerase subunit alpha"/>
    <property type="match status" value="1"/>
</dbReference>
<dbReference type="Gene3D" id="1.10.150.20">
    <property type="entry name" value="5' to 3' exonuclease, C-terminal subdomain"/>
    <property type="match status" value="1"/>
</dbReference>
<dbReference type="Gene3D" id="2.170.120.12">
    <property type="entry name" value="DNA-directed RNA polymerase, insert domain"/>
    <property type="match status" value="1"/>
</dbReference>
<dbReference type="Gene3D" id="3.30.1360.10">
    <property type="entry name" value="RNA polymerase, RBP11-like subunit"/>
    <property type="match status" value="1"/>
</dbReference>
<dbReference type="HAMAP" id="MF_00059">
    <property type="entry name" value="RNApol_bact_RpoA"/>
    <property type="match status" value="1"/>
</dbReference>
<dbReference type="InterPro" id="IPR011262">
    <property type="entry name" value="DNA-dir_RNA_pol_insert"/>
</dbReference>
<dbReference type="InterPro" id="IPR011263">
    <property type="entry name" value="DNA-dir_RNA_pol_RpoA/D/Rpb3"/>
</dbReference>
<dbReference type="InterPro" id="IPR011773">
    <property type="entry name" value="DNA-dir_RpoA"/>
</dbReference>
<dbReference type="InterPro" id="IPR036603">
    <property type="entry name" value="RBP11-like"/>
</dbReference>
<dbReference type="InterPro" id="IPR011260">
    <property type="entry name" value="RNAP_asu_C"/>
</dbReference>
<dbReference type="InterPro" id="IPR036643">
    <property type="entry name" value="RNApol_insert_sf"/>
</dbReference>
<dbReference type="NCBIfam" id="NF003516">
    <property type="entry name" value="PRK05182.2-2"/>
    <property type="match status" value="1"/>
</dbReference>
<dbReference type="NCBIfam" id="NF003519">
    <property type="entry name" value="PRK05182.2-5"/>
    <property type="match status" value="1"/>
</dbReference>
<dbReference type="NCBIfam" id="TIGR02027">
    <property type="entry name" value="rpoA"/>
    <property type="match status" value="1"/>
</dbReference>
<dbReference type="Pfam" id="PF01000">
    <property type="entry name" value="RNA_pol_A_bac"/>
    <property type="match status" value="1"/>
</dbReference>
<dbReference type="Pfam" id="PF03118">
    <property type="entry name" value="RNA_pol_A_CTD"/>
    <property type="match status" value="1"/>
</dbReference>
<dbReference type="Pfam" id="PF01193">
    <property type="entry name" value="RNA_pol_L"/>
    <property type="match status" value="1"/>
</dbReference>
<dbReference type="SMART" id="SM00662">
    <property type="entry name" value="RPOLD"/>
    <property type="match status" value="1"/>
</dbReference>
<dbReference type="SUPFAM" id="SSF47789">
    <property type="entry name" value="C-terminal domain of RNA polymerase alpha subunit"/>
    <property type="match status" value="1"/>
</dbReference>
<dbReference type="SUPFAM" id="SSF56553">
    <property type="entry name" value="Insert subdomain of RNA polymerase alpha subunit"/>
    <property type="match status" value="1"/>
</dbReference>
<dbReference type="SUPFAM" id="SSF55257">
    <property type="entry name" value="RBP11-like subunits of RNA polymerase"/>
    <property type="match status" value="1"/>
</dbReference>
<evidence type="ECO:0000255" key="1">
    <source>
        <dbReference type="HAMAP-Rule" id="MF_00059"/>
    </source>
</evidence>
<gene>
    <name evidence="1" type="primary">rpoA</name>
    <name type="ordered locus">P9215_18071</name>
</gene>